<keyword id="KW-0966">Cell projection</keyword>
<keyword id="KW-0903">Direct protein sequencing</keyword>
<keyword id="KW-1015">Disulfide bond</keyword>
<keyword id="KW-0372">Hormone</keyword>
<keyword id="KW-0597">Phosphoprotein</keyword>
<keyword id="KW-1185">Reference proteome</keyword>
<keyword id="KW-0964">Secreted</keyword>
<keyword id="KW-0732">Signal</keyword>
<keyword id="KW-0838">Vasoactive</keyword>
<keyword id="KW-0840">Vasodilator</keyword>
<accession>P07501</accession>
<accession>A6QNW0</accession>
<evidence type="ECO:0000250" key="1">
    <source>
        <dbReference type="UniProtKB" id="P01160"/>
    </source>
</evidence>
<evidence type="ECO:0000250" key="2">
    <source>
        <dbReference type="UniProtKB" id="P01161"/>
    </source>
</evidence>
<evidence type="ECO:0000250" key="3">
    <source>
        <dbReference type="UniProtKB" id="P05125"/>
    </source>
</evidence>
<evidence type="ECO:0000250" key="4">
    <source>
        <dbReference type="UniProtKB" id="P24259"/>
    </source>
</evidence>
<evidence type="ECO:0000256" key="5">
    <source>
        <dbReference type="SAM" id="MobiDB-lite"/>
    </source>
</evidence>
<evidence type="ECO:0000269" key="6">
    <source>
    </source>
</evidence>
<evidence type="ECO:0000305" key="7"/>
<evidence type="ECO:0000305" key="8">
    <source>
    </source>
</evidence>
<comment type="function">
    <molecule>Atrial natriuretic peptide</molecule>
    <text evidence="1 3">Hormone that plays a key role in mediating cardio-renal homeostasis, and is involved in vascular remodeling and regulating energy metabolism (By similarity). Acts by specifically binding and stimulating NPR1 to produce cGMP, which in turn activates effector proteins, such as PRKG1, that drive various biological responses (By similarity). Regulates vasodilation, natriuresis, diuresis and aldosterone synthesis and is therefore essential for regulating blood pressure, controlling the extracellular fluid volume and maintaining the fluid-electrolyte balance (By similarity). Also involved in inhibiting cardiac remodeling and cardiac hypertrophy by inducing cardiomyocyte apoptosis and attenuating the growth of cardiomyocytes and fibroblasts (By similarity). Plays a role in female pregnancy by promoting trophoblast invasion and spiral artery remodeling in uterus, and thus prevents pregnancy-induced hypertension (By similarity). In adipose tissue, acts in various cGMP- and PKG-dependent pathways to regulate lipid metabolism and energy homeostasis (By similarity). This includes up-regulating lipid metabolism and mitochondrial oxygen utilization by activating the AMP-activated protein kinase (AMPK), and increasing energy expenditure by acting via MAPK11 to promote the UCP1-dependent thermogenesis of brown adipose tissue (By similarity). Binds the clearance receptor NPR3 which removes the hormone from circulation (By similarity).</text>
</comment>
<comment type="function">
    <molecule>Long-acting natriuretic peptide</molecule>
    <text evidence="1 2">May have a role in cardio-renal homeostasis through regulation of natriuresis, diuresis, vasodilation, and inhibiting aldosterone synthesis. In vitro, promotes the production of cGMP and induces vasodilation. May promote natriuresis, at least in part, by enhancing prostaglandin E2 synthesis resulting in the inhibition of renal Na+-K+-ATPase (By similarity). However reports on the involvement of this peptide in mammal blood volume and blood pressure homeostasis are conflicting; according to a report, in vivo it is not sufficient to activate cGMP and does not inhibit collecting duct transport nor effect diuresis and natriuresis (By similarity). Appears to bind to specific receptors that are distinct from the receptors bound by atrial natriuretic peptide and vessel dilator. Possibly enhances protein excretion in urine by decreasing proximal tubular protein reabsorption (By similarity).</text>
</comment>
<comment type="function">
    <molecule>Vessel dilator</molecule>
    <text evidence="1">May have a role in cardio-renal homeostasis through regulation of natriuresis, diuresis, and vasodilation. In vitro, promotes the production of cGMP and induces vasodilation. May promote natriuresis, at least in part, by enhancing prostaglandin E2 synthesis resulting in the inhibition of renal Na+-K+-ATPase. However reports on the involvement of this peptide in mammal blood volume and blood pressure homeostasis are conflicting; according to a report it is not sufficient to activate cGMP and does not inhibit collecting duct transport nor effect diuresis and natriuresis. Appears to bind to specific receptors that are distinct from the receptors bound by the atrial natriuretic and long-acting natriuretic peptides. Possibly functions in protein excretion in urine by maintaining the integrity of the proximal tubules and enhancing protein excretion by decreasing proximal tubular protein reabsorption.</text>
</comment>
<comment type="function">
    <molecule>Kaliuretic peptide</molecule>
    <text evidence="1">May have a role in cardio-renal homeostasis through regulation of diuresis and inhibiting aldosterone synthesis. In vitro, promotes the production of cGMP and induces vasodilation. May promote natriuresis, at least in part, by enhancing prostaglandin E2 synthesis resulting in the inhibition of renal Na+-K+-ATPase. May have a role in potassium excretion but not sodium excretion (natriuresis). Possibly enhances protein excretion in urine by decreasing proximal tubular protein reabsorption.</text>
</comment>
<comment type="function">
    <molecule>Urodilatin</molecule>
    <text evidence="1">Hormone produced in the kidneys that appears to be important for maintaining cardio-renal homeostasis. Mediates vasodilation, natriuresis and diuresis primarily in the renal system, in order to maintain the extracellular fluid volume and control the fluid-electrolyte balance. Specifically binds and stimulates cGMP production by renal transmembrane receptors, likely NPR1. Urodilatin not ANP, may be the natriuretic peptide responsible for the regulation of sodium and water homeostasis in the kidney.</text>
</comment>
<comment type="function">
    <molecule>Auriculin-D</molecule>
    <text evidence="2">May have a role in cardio-renal homeostasis through regulation of natriuresis and vasodilation. In vivo promotes natriuresis and in vitro, vasodilates renal artery strips.</text>
</comment>
<comment type="function">
    <molecule>Auriculin-B</molecule>
    <text evidence="2">May have a role in cardio-renal homeostasis through regulation of natriuresis and vasodilation. In vivo promotes natriuresis and in vitro, vasodilates renal artery strips.</text>
</comment>
<comment type="function">
    <molecule>Auriculin-A</molecule>
    <text evidence="2">May have a role in cardio-renal homeostasis through regulation of regulation of natriuresis and vasodilation. In vivo promotes natriuresis. In vitro, vasodilates intestinal smooth muscle but not smooth muscle strips.</text>
</comment>
<comment type="function">
    <molecule>Atriopeptin-2</molecule>
    <text evidence="2">May have a role in cardio-renal homeostasis through regulation of natriuresis and vasodilation. In vivo promotes natriuresis. In vitro, selectively vasodilates intestinal and vascular smooth muscle strips.</text>
</comment>
<comment type="function">
    <molecule>Atriopeptin-1</molecule>
    <text evidence="2">May have a role in cardio-renal homeostasis through regulation of natriuresis and vasodilation. In vivo promotes natriuresis. In vitro, selectively vasodilates intestinal smooth muscle but not vascular smooth muscle strips.</text>
</comment>
<comment type="subunit">
    <molecule>Atrial natriuretic peptide</molecule>
    <text evidence="1">Homodimer; disulfide-linked antiparallel dimer.</text>
</comment>
<comment type="subcellular location">
    <molecule>Long-acting natriuretic peptide</molecule>
    <subcellularLocation>
        <location evidence="1">Secreted</location>
    </subcellularLocation>
    <text evidence="1">Detected in blood.</text>
</comment>
<comment type="subcellular location">
    <molecule>Vessel dilator</molecule>
    <subcellularLocation>
        <location evidence="1">Secreted</location>
    </subcellularLocation>
    <text evidence="1">Detected in blood.</text>
</comment>
<comment type="subcellular location">
    <molecule>Kaliuretic peptide</molecule>
    <subcellularLocation>
        <location evidence="1">Secreted</location>
    </subcellularLocation>
    <text evidence="1">Detected in blood.</text>
</comment>
<comment type="subcellular location">
    <molecule>Urodilatin</molecule>
    <subcellularLocation>
        <location evidence="1">Secreted</location>
    </subcellularLocation>
    <text evidence="1">Detected in urine. Not detected in blood. Increased electrolytes, osmolality and intracellular cAMP levels increase peptide secretion/excretion.</text>
</comment>
<comment type="subcellular location">
    <molecule>Atrial natriuretic peptide</molecule>
    <subcellularLocation>
        <location evidence="1">Secreted</location>
    </subcellularLocation>
    <subcellularLocation>
        <location evidence="1">Perikaryon</location>
    </subcellularLocation>
    <subcellularLocation>
        <location evidence="1">Cell projection</location>
    </subcellularLocation>
    <text evidence="1 2">Detected in blood. Detected in urine in one study. However, in another study, was not detected in urine. Detected in cytoplasmic bodies and neuronal processes of pyramidal neurons (layers II-VI) (By similarity). Increased secretion in response to the vasopressin AVP (By similarity). Likely to be secreted in response to an increase in atrial pressure or atrial stretch. In kidney cells, secretion increases in response to activated guanylyl cyclases and increased intracellular cAMP levels. Plasma levels increase 15 minutes after a high-salt meal, and decrease back to normal plasma levels 1 hr later (By similarity).</text>
</comment>
<comment type="subcellular location">
    <molecule>Atriopeptin-3</molecule>
    <subcellularLocation>
        <location evidence="2">Secreted</location>
    </subcellularLocation>
    <text evidence="2">Detected in blood. Slight increase in secretion in response to the vasopressin AVP.</text>
</comment>
<comment type="PTM">
    <text evidence="1 2">The precursor molecule is proteolytically cleaved by CORIN at Arg-122 to produce the atrial natriuretic peptide (By similarity). Undergoes further proteolytic cleavage by unknown proteases to give rise to long-acting natriuretic peptide, vessel dilator and kaliuretic peptide (By similarity). Additional processing gives rise to the auriculin and atriopeptin peptides (By similarity). In the kidneys, alternative processing by an unknown protease results in the peptide urodilatin (By similarity).</text>
</comment>
<comment type="PTM">
    <molecule>Atrial natriuretic peptide</molecule>
    <text evidence="1">Cleavage by MME initiates degradation of the factor and thereby regulates its activity. Degradation by IDE results in reduced activation of NPR1 (in vitro). During IDE degradation, the resulting products can temporarily stimulate NPR2 to produce cGMP, before the fragments are completely degraded and inactivated by IDE (in vitro).</text>
</comment>
<comment type="PTM">
    <molecule>Urodilatin</molecule>
    <text evidence="1">Degraded by IDE.</text>
</comment>
<comment type="PTM">
    <molecule>Urodilatin</molecule>
    <text evidence="1">Phosphorylation on Ser-128 decreases vasorelaxant activity.</text>
</comment>
<comment type="similarity">
    <text evidence="7">Belongs to the natriuretic peptide family.</text>
</comment>
<comment type="caution">
    <molecule>Long-acting natriuretic peptide</molecule>
    <text evidence="1 2">Results concerning the involvement of this peptide in blood volume and blood pressure homeostasis are conflicting. Several studies utilising in vitro and heterologous expression systems show that it is able to activate cGMP and promote vasodilation and natriuresis (By similarity). However, an in vivo study in rat found that it is not sufficient to induce any diuretic, natriuretic, nor hypotensive responses, and is unable to bind NPR1 nor increase guanylyl cyclase activity (By similarity).</text>
</comment>
<comment type="caution">
    <molecule>Vessel dilator</molecule>
    <text evidence="1 2">Results concerning the involvement of this peptide in blood volume and blood pressure homeostasis are conflicting. Several studies utilising in vitro and heterologous expression systems show that it is able to activate cGMP and promote vasodilation and natriuresis (By similarity). However, a heterologous and in vivo expression study in rat found that it is not sufficient to induce any diuretic, natriuretic, nor hypotensive responses, and is unable to bind NPR1 nor increase guanylyl cyclase activity (By similarity).</text>
</comment>
<feature type="signal peptide" evidence="4">
    <location>
        <begin position="1"/>
        <end position="24"/>
    </location>
</feature>
<feature type="chain" id="PRO_0000449669" description="Natriuretic peptides A" evidence="1">
    <location>
        <begin position="25"/>
        <end position="150"/>
    </location>
</feature>
<feature type="propeptide" id="PRO_0000001482" evidence="7">
    <location>
        <begin position="25"/>
        <end position="122"/>
    </location>
</feature>
<feature type="peptide" id="PRO_0000449670" description="Long-acting natriuretic peptide" evidence="1">
    <location>
        <begin position="25"/>
        <end position="54"/>
    </location>
</feature>
<feature type="peptide" id="PRO_0000449671" description="Vessel dilator" evidence="1">
    <location>
        <begin position="55"/>
        <end position="91"/>
    </location>
</feature>
<feature type="propeptide" id="PRO_0000449672" evidence="1">
    <location>
        <begin position="92"/>
        <end position="102"/>
    </location>
</feature>
<feature type="peptide" id="PRO_0000449673" description="Kaliuretic peptide" evidence="1">
    <location>
        <begin position="103"/>
        <end position="122"/>
    </location>
</feature>
<feature type="peptide" id="PRO_0000449674" description="Auriculin-C" evidence="2">
    <location>
        <begin position="118"/>
        <end position="150"/>
    </location>
</feature>
<feature type="peptide" id="PRO_0000449675" description="Urodilatin" evidence="1">
    <location>
        <begin position="119"/>
        <end position="150"/>
    </location>
</feature>
<feature type="peptide" id="PRO_0000449676" description="Auriculin-D" evidence="2">
    <location>
        <begin position="120"/>
        <end position="144"/>
    </location>
</feature>
<feature type="peptide" id="PRO_0000001483" description="Atrial natriuretic peptide" evidence="6">
    <location>
        <begin position="123"/>
        <end position="150"/>
    </location>
</feature>
<feature type="peptide" id="PRO_0000449677" description="Auriculin-B" evidence="2">
    <location>
        <begin position="126"/>
        <end position="150"/>
    </location>
</feature>
<feature type="peptide" id="PRO_0000449678" description="Auriculin-A" evidence="2">
    <location>
        <begin position="126"/>
        <end position="149"/>
    </location>
</feature>
<feature type="peptide" id="PRO_0000449679" description="Atriopeptin-3" evidence="2">
    <location>
        <begin position="127"/>
        <end position="150"/>
    </location>
</feature>
<feature type="peptide" id="PRO_0000449680" description="Atriopeptin-2" evidence="2">
    <location>
        <begin position="127"/>
        <end position="149"/>
    </location>
</feature>
<feature type="peptide" id="PRO_0000449681" description="Atriopeptin-1" evidence="2">
    <location>
        <begin position="127"/>
        <end position="147"/>
    </location>
</feature>
<feature type="region of interest" description="Disordered" evidence="5">
    <location>
        <begin position="58"/>
        <end position="101"/>
    </location>
</feature>
<feature type="region of interest" description="Important for degradation of atrial natriuretic peptide by IDE" evidence="1">
    <location>
        <begin position="146"/>
        <end position="150"/>
    </location>
</feature>
<feature type="site" description="Cleavage; by CORIN" evidence="8">
    <location>
        <begin position="122"/>
        <end position="123"/>
    </location>
</feature>
<feature type="site" description="Cleavage; by MME" evidence="1">
    <location>
        <begin position="129"/>
        <end position="130"/>
    </location>
</feature>
<feature type="modified residue" description="Phosphoserine" evidence="1">
    <location>
        <position position="128"/>
    </location>
</feature>
<feature type="disulfide bond" evidence="1">
    <location>
        <begin position="129"/>
        <end position="145"/>
    </location>
</feature>
<protein>
    <recommendedName>
        <fullName evidence="7">Natriuretic peptides A</fullName>
    </recommendedName>
    <alternativeName>
        <fullName evidence="1">Atrial natriuretic factor prohormone</fullName>
        <shortName evidence="2">preproANF</shortName>
        <shortName evidence="1">proANF</shortName>
    </alternativeName>
    <alternativeName>
        <fullName evidence="1">Atrial natriuretic peptide prohormone</fullName>
        <shortName evidence="1">preproANP</shortName>
        <shortName evidence="1">proANP</shortName>
    </alternativeName>
    <alternativeName>
        <fullName evidence="2">Atriopeptigen</fullName>
    </alternativeName>
    <alternativeName>
        <fullName evidence="1">Cardiodilatin</fullName>
        <shortName evidence="1">CDD</shortName>
    </alternativeName>
    <alternativeName>
        <fullName evidence="1">preproCDD-ANF</fullName>
    </alternativeName>
    <component>
        <recommendedName>
            <fullName evidence="1">Long-acting natriuretic peptide</fullName>
            <shortName evidence="1">LANP</shortName>
        </recommendedName>
        <alternativeName>
            <fullName evidence="7">Long-acting natriuretic hormone</fullName>
            <shortName evidence="7">LANH</shortName>
        </alternativeName>
        <alternativeName>
            <fullName evidence="1">Pro atrial natriuretic factor 1-30</fullName>
            <shortName evidence="1">proANF 1-30</shortName>
        </alternativeName>
        <alternativeName>
            <fullName evidence="7">Pro atrial natriuretic peptide 1-30</fullName>
            <shortName evidence="7">proANP 1-30</shortName>
        </alternativeName>
    </component>
    <component>
        <recommendedName>
            <fullName evidence="1">Vessel dilator</fullName>
            <shortName evidence="1">VSDL</shortName>
        </recommendedName>
        <alternativeName>
            <fullName evidence="1">Pro atrial natriuretic factor 31-67</fullName>
            <shortName evidence="1">proANF 31-67</shortName>
        </alternativeName>
        <alternativeName>
            <fullName evidence="7">Pro atrial natriuretic peptide 31-67</fullName>
            <shortName evidence="7">proANP 31-67</shortName>
        </alternativeName>
    </component>
    <component>
        <recommendedName>
            <fullName evidence="1">Kaliuretic peptide</fullName>
            <shortName evidence="1">KP</shortName>
        </recommendedName>
        <alternativeName>
            <fullName evidence="1">Pro atrial natriuretic factor 79-98</fullName>
            <shortName evidence="1">proANF 79-98</shortName>
        </alternativeName>
        <alternativeName>
            <fullName evidence="7">Pro atrial natriuretic peptide 79-98</fullName>
            <shortName evidence="7">proANP 79-98</shortName>
        </alternativeName>
    </component>
    <component>
        <recommendedName>
            <fullName evidence="1">Urodilatin</fullName>
            <shortName evidence="1">URO</shortName>
        </recommendedName>
        <alternativeName>
            <fullName evidence="1">CDD 95-126</fullName>
        </alternativeName>
        <alternativeName>
            <fullName evidence="1">CDD-ANP (95-126)</fullName>
        </alternativeName>
        <alternativeName>
            <fullName evidence="1">Pro atrial natriuretic peptide 95-126</fullName>
            <shortName evidence="1">proANP 95-126</shortName>
        </alternativeName>
    </component>
    <component>
        <recommendedName>
            <fullName evidence="7">Auriculin-C</fullName>
        </recommendedName>
        <alternativeName>
            <fullName evidence="2">Atrial natriuretic factor 1-33</fullName>
            <shortName evidence="2">ANF 1-33</shortName>
        </alternativeName>
    </component>
    <component>
        <recommendedName>
            <fullName evidence="7">Auriculin-D</fullName>
        </recommendedName>
        <alternativeName>
            <fullName evidence="2">Atrial natriuretic factor 3-33</fullName>
            <shortName evidence="2">ANF 3-33</shortName>
        </alternativeName>
    </component>
    <component>
        <recommendedName>
            <fullName evidence="1">Atrial natriuretic peptide</fullName>
            <shortName evidence="1">ANP</shortName>
        </recommendedName>
        <alternativeName>
            <fullName evidence="1">Alpha-atrial natriuretic peptide</fullName>
        </alternativeName>
        <alternativeName>
            <fullName evidence="1">Alpha-hANP</fullName>
        </alternativeName>
        <alternativeName>
            <fullName evidence="1">Atrial natriuretic factor</fullName>
            <shortName evidence="1">ANF</shortName>
        </alternativeName>
        <alternativeName>
            <fullName evidence="1">CDD-ANF</fullName>
        </alternativeName>
        <alternativeName>
            <fullName evidence="1">CDD-ANP (99-126)</fullName>
        </alternativeName>
        <alternativeName>
            <fullName evidence="2">Cardionatrin</fullName>
        </alternativeName>
        <alternativeName>
            <fullName evidence="1">Pro atrial natriuretic factor 99-126</fullName>
            <shortName evidence="1">proANF 99-126</shortName>
        </alternativeName>
    </component>
    <component>
        <recommendedName>
            <fullName evidence="7">Auriculin-B</fullName>
        </recommendedName>
        <alternativeName>
            <fullName evidence="2">Atrial natriuretic factor 8-33</fullName>
            <shortName evidence="2">ANF 8-33</shortName>
        </alternativeName>
    </component>
    <component>
        <recommendedName>
            <fullName evidence="2">Auriculin-A</fullName>
        </recommendedName>
    </component>
    <component>
        <recommendedName>
            <fullName evidence="2">Atriopeptin-1</fullName>
        </recommendedName>
        <alternativeName>
            <fullName evidence="2">Atriopeptin I</fullName>
        </alternativeName>
    </component>
    <component>
        <recommendedName>
            <fullName evidence="2">Atriopeptin-2</fullName>
        </recommendedName>
        <alternativeName>
            <fullName evidence="2">Atriopeptin II</fullName>
        </alternativeName>
    </component>
    <component>
        <recommendedName>
            <fullName evidence="2">Atriopeptin-3</fullName>
        </recommendedName>
        <alternativeName>
            <fullName evidence="2">Atriopeptin III</fullName>
        </alternativeName>
    </component>
</protein>
<dbReference type="EMBL" id="M13145">
    <property type="protein sequence ID" value="AAA30375.1"/>
    <property type="molecule type" value="Genomic_DNA"/>
</dbReference>
<dbReference type="EMBL" id="BC149029">
    <property type="protein sequence ID" value="AAI49030.1"/>
    <property type="molecule type" value="mRNA"/>
</dbReference>
<dbReference type="PIR" id="A90124">
    <property type="entry name" value="AWBO"/>
</dbReference>
<dbReference type="RefSeq" id="NP_776549.1">
    <property type="nucleotide sequence ID" value="NM_174124.1"/>
</dbReference>
<dbReference type="FunCoup" id="P07501">
    <property type="interactions" value="237"/>
</dbReference>
<dbReference type="STRING" id="9913.ENSBTAP00000008819"/>
<dbReference type="PaxDb" id="9913-ENSBTAP00000008819"/>
<dbReference type="Ensembl" id="ENSBTAT00000008819.6">
    <property type="protein sequence ID" value="ENSBTAP00000008819.4"/>
    <property type="gene ID" value="ENSBTAG00000006709.6"/>
</dbReference>
<dbReference type="GeneID" id="281355"/>
<dbReference type="KEGG" id="bta:281355"/>
<dbReference type="CTD" id="4878"/>
<dbReference type="VEuPathDB" id="HostDB:ENSBTAG00000006709"/>
<dbReference type="VGNC" id="VGNC:32210">
    <property type="gene designation" value="NPPA"/>
</dbReference>
<dbReference type="eggNOG" id="ENOG502S9RQ">
    <property type="taxonomic scope" value="Eukaryota"/>
</dbReference>
<dbReference type="GeneTree" id="ENSGT00940000154513"/>
<dbReference type="HOGENOM" id="CLU_144536_0_0_1"/>
<dbReference type="InParanoid" id="P07501"/>
<dbReference type="OMA" id="GPWDASD"/>
<dbReference type="OrthoDB" id="8865096at2759"/>
<dbReference type="TreeFam" id="TF106304"/>
<dbReference type="Reactome" id="R-BTA-5578768">
    <property type="pathway name" value="Physiological factors"/>
</dbReference>
<dbReference type="Proteomes" id="UP000009136">
    <property type="component" value="Chromosome 16"/>
</dbReference>
<dbReference type="Bgee" id="ENSBTAG00000006709">
    <property type="expression patterns" value="Expressed in cardiac atrium and 28 other cell types or tissues"/>
</dbReference>
<dbReference type="GO" id="GO:0042995">
    <property type="term" value="C:cell projection"/>
    <property type="evidence" value="ECO:0007669"/>
    <property type="project" value="UniProtKB-SubCell"/>
</dbReference>
<dbReference type="GO" id="GO:0005737">
    <property type="term" value="C:cytoplasm"/>
    <property type="evidence" value="ECO:0000318"/>
    <property type="project" value="GO_Central"/>
</dbReference>
<dbReference type="GO" id="GO:0005615">
    <property type="term" value="C:extracellular space"/>
    <property type="evidence" value="ECO:0000318"/>
    <property type="project" value="GO_Central"/>
</dbReference>
<dbReference type="GO" id="GO:0043204">
    <property type="term" value="C:perikaryon"/>
    <property type="evidence" value="ECO:0007669"/>
    <property type="project" value="UniProtKB-SubCell"/>
</dbReference>
<dbReference type="GO" id="GO:0032991">
    <property type="term" value="C:protein-containing complex"/>
    <property type="evidence" value="ECO:0007669"/>
    <property type="project" value="Ensembl"/>
</dbReference>
<dbReference type="GO" id="GO:0005179">
    <property type="term" value="F:hormone activity"/>
    <property type="evidence" value="ECO:0000318"/>
    <property type="project" value="GO_Central"/>
</dbReference>
<dbReference type="GO" id="GO:0051427">
    <property type="term" value="F:hormone receptor binding"/>
    <property type="evidence" value="ECO:0000318"/>
    <property type="project" value="GO_Central"/>
</dbReference>
<dbReference type="GO" id="GO:0005184">
    <property type="term" value="F:neuropeptide hormone activity"/>
    <property type="evidence" value="ECO:0007669"/>
    <property type="project" value="Ensembl"/>
</dbReference>
<dbReference type="GO" id="GO:0071855">
    <property type="term" value="F:neuropeptide receptor binding"/>
    <property type="evidence" value="ECO:0007669"/>
    <property type="project" value="Ensembl"/>
</dbReference>
<dbReference type="GO" id="GO:0014898">
    <property type="term" value="P:cardiac muscle hypertrophy in response to stress"/>
    <property type="evidence" value="ECO:0007669"/>
    <property type="project" value="Ensembl"/>
</dbReference>
<dbReference type="GO" id="GO:0006182">
    <property type="term" value="P:cGMP biosynthetic process"/>
    <property type="evidence" value="ECO:0000250"/>
    <property type="project" value="UniProtKB"/>
</dbReference>
<dbReference type="GO" id="GO:0019934">
    <property type="term" value="P:cGMP-mediated signaling"/>
    <property type="evidence" value="ECO:0000318"/>
    <property type="project" value="GO_Central"/>
</dbReference>
<dbReference type="GO" id="GO:0007565">
    <property type="term" value="P:female pregnancy"/>
    <property type="evidence" value="ECO:0000250"/>
    <property type="project" value="UniProtKB"/>
</dbReference>
<dbReference type="GO" id="GO:0003085">
    <property type="term" value="P:negative regulation of systemic arterial blood pressure"/>
    <property type="evidence" value="ECO:0000318"/>
    <property type="project" value="GO_Central"/>
</dbReference>
<dbReference type="GO" id="GO:0007218">
    <property type="term" value="P:neuropeptide signaling pathway"/>
    <property type="evidence" value="ECO:0000318"/>
    <property type="project" value="GO_Central"/>
</dbReference>
<dbReference type="GO" id="GO:0060452">
    <property type="term" value="P:positive regulation of cardiac muscle contraction"/>
    <property type="evidence" value="ECO:0007669"/>
    <property type="project" value="Ensembl"/>
</dbReference>
<dbReference type="GO" id="GO:0010460">
    <property type="term" value="P:positive regulation of heart rate"/>
    <property type="evidence" value="ECO:0007669"/>
    <property type="project" value="Ensembl"/>
</dbReference>
<dbReference type="GO" id="GO:1903766">
    <property type="term" value="P:positive regulation of potassium ion export across plasma membrane"/>
    <property type="evidence" value="ECO:0007669"/>
    <property type="project" value="Ensembl"/>
</dbReference>
<dbReference type="GO" id="GO:0006457">
    <property type="term" value="P:protein folding"/>
    <property type="evidence" value="ECO:0007669"/>
    <property type="project" value="Ensembl"/>
</dbReference>
<dbReference type="GO" id="GO:0007168">
    <property type="term" value="P:receptor guanylyl cyclase signaling pathway"/>
    <property type="evidence" value="ECO:0000250"/>
    <property type="project" value="UniProtKB"/>
</dbReference>
<dbReference type="GO" id="GO:0060372">
    <property type="term" value="P:regulation of atrial cardiac muscle cell membrane repolarization"/>
    <property type="evidence" value="ECO:0007669"/>
    <property type="project" value="Ensembl"/>
</dbReference>
<dbReference type="GO" id="GO:0008217">
    <property type="term" value="P:regulation of blood pressure"/>
    <property type="evidence" value="ECO:0000250"/>
    <property type="project" value="UniProtKB"/>
</dbReference>
<dbReference type="GO" id="GO:0036376">
    <property type="term" value="P:sodium ion export across plasma membrane"/>
    <property type="evidence" value="ECO:0007669"/>
    <property type="project" value="Ensembl"/>
</dbReference>
<dbReference type="GO" id="GO:0042311">
    <property type="term" value="P:vasodilation"/>
    <property type="evidence" value="ECO:0007669"/>
    <property type="project" value="UniProtKB-KW"/>
</dbReference>
<dbReference type="InterPro" id="IPR000663">
    <property type="entry name" value="Natr_peptide"/>
</dbReference>
<dbReference type="InterPro" id="IPR030480">
    <property type="entry name" value="Natr_peptide_CS"/>
</dbReference>
<dbReference type="InterPro" id="IPR050787">
    <property type="entry name" value="Natriuretic_peptide"/>
</dbReference>
<dbReference type="InterPro" id="IPR002407">
    <property type="entry name" value="Natriuretic_peptide_atrial"/>
</dbReference>
<dbReference type="PANTHER" id="PTHR14066">
    <property type="entry name" value="ATRIAL NATRIURETIC FACTOR PRECURSOR"/>
    <property type="match status" value="1"/>
</dbReference>
<dbReference type="PANTHER" id="PTHR14066:SF2">
    <property type="entry name" value="NATRIURETIC PEPTIDES A"/>
    <property type="match status" value="1"/>
</dbReference>
<dbReference type="Pfam" id="PF00212">
    <property type="entry name" value="ANP"/>
    <property type="match status" value="1"/>
</dbReference>
<dbReference type="PRINTS" id="PR00711">
    <property type="entry name" value="ANATPEPTIDE"/>
</dbReference>
<dbReference type="PRINTS" id="PR00710">
    <property type="entry name" value="NATPEPTIDES"/>
</dbReference>
<dbReference type="SMART" id="SM00183">
    <property type="entry name" value="NAT_PEP"/>
    <property type="match status" value="1"/>
</dbReference>
<dbReference type="PROSITE" id="PS00263">
    <property type="entry name" value="NATRIURETIC_PEPTIDE"/>
    <property type="match status" value="1"/>
</dbReference>
<organism>
    <name type="scientific">Bos taurus</name>
    <name type="common">Bovine</name>
    <dbReference type="NCBI Taxonomy" id="9913"/>
    <lineage>
        <taxon>Eukaryota</taxon>
        <taxon>Metazoa</taxon>
        <taxon>Chordata</taxon>
        <taxon>Craniata</taxon>
        <taxon>Vertebrata</taxon>
        <taxon>Euteleostomi</taxon>
        <taxon>Mammalia</taxon>
        <taxon>Eutheria</taxon>
        <taxon>Laurasiatheria</taxon>
        <taxon>Artiodactyla</taxon>
        <taxon>Ruminantia</taxon>
        <taxon>Pecora</taxon>
        <taxon>Bovidae</taxon>
        <taxon>Bovinae</taxon>
        <taxon>Bos</taxon>
    </lineage>
</organism>
<sequence length="152" mass="16518">MGSSAITVSFLLFLAFQLPGQTGANPVYGSVSNADLMDFKNLLDRLEDKMPLEDEAVPSQVLSEQNEEAGAPLSPLSEMPPWMGEVNPAQREGGVLGRGPWESSDRSALLKSKLRALLTAPRSLRRSSCFGGRMDRIGAQSGLGCNSFRYRR</sequence>
<proteinExistence type="evidence at protein level"/>
<gene>
    <name type="primary">NPPA</name>
</gene>
<name>ANF_BOVIN</name>
<reference key="1">
    <citation type="journal article" date="1986" name="Biochem. Biophys. Res. Commun.">
        <title>Structure and analysis of the bovine atrial natriuretic peptide precursor gene.</title>
        <authorList>
            <person name="Vlasuk G.P."/>
            <person name="Miller J."/>
            <person name="Bencen G.H."/>
            <person name="Lewicki J.A."/>
        </authorList>
    </citation>
    <scope>NUCLEOTIDE SEQUENCE [GENOMIC DNA]</scope>
</reference>
<reference key="2">
    <citation type="submission" date="2007-07" db="EMBL/GenBank/DDBJ databases">
        <authorList>
            <consortium name="NIH - Mammalian Gene Collection (MGC) project"/>
        </authorList>
    </citation>
    <scope>NUCLEOTIDE SEQUENCE [LARGE SCALE MRNA]</scope>
    <source>
        <strain>Hereford</strain>
        <tissue>Heart ventricle</tissue>
    </source>
</reference>
<reference key="3">
    <citation type="journal article" date="1986" name="Life Sci.">
        <title>Purification and sequence determination of bovine atrial natriuretic factor.</title>
        <authorList>
            <person name="Ong H."/>
            <person name="McNicoll N."/>
            <person name="Lazure C."/>
            <person name="Seidah N."/>
            <person name="Chretien M."/>
            <person name="Cantin M."/>
            <person name="de Lean A."/>
        </authorList>
    </citation>
    <scope>PROTEIN SEQUENCE OF 123-150</scope>
</reference>